<proteinExistence type="inferred from homology"/>
<feature type="chain" id="PRO_1000057976" description="Phosphoglycerate kinase">
    <location>
        <begin position="1"/>
        <end position="403"/>
    </location>
</feature>
<feature type="binding site" evidence="1">
    <location>
        <begin position="21"/>
        <end position="23"/>
    </location>
    <ligand>
        <name>substrate</name>
    </ligand>
</feature>
<feature type="binding site" evidence="1">
    <location>
        <position position="36"/>
    </location>
    <ligand>
        <name>substrate</name>
    </ligand>
</feature>
<feature type="binding site" evidence="1">
    <location>
        <begin position="59"/>
        <end position="62"/>
    </location>
    <ligand>
        <name>substrate</name>
    </ligand>
</feature>
<feature type="binding site" evidence="1">
    <location>
        <position position="119"/>
    </location>
    <ligand>
        <name>substrate</name>
    </ligand>
</feature>
<feature type="binding site" evidence="1">
    <location>
        <position position="154"/>
    </location>
    <ligand>
        <name>substrate</name>
    </ligand>
</feature>
<feature type="binding site" evidence="1">
    <location>
        <position position="207"/>
    </location>
    <ligand>
        <name>ATP</name>
        <dbReference type="ChEBI" id="CHEBI:30616"/>
    </ligand>
</feature>
<feature type="binding site" evidence="1">
    <location>
        <position position="299"/>
    </location>
    <ligand>
        <name>ATP</name>
        <dbReference type="ChEBI" id="CHEBI:30616"/>
    </ligand>
</feature>
<feature type="binding site" evidence="1">
    <location>
        <position position="330"/>
    </location>
    <ligand>
        <name>ATP</name>
        <dbReference type="ChEBI" id="CHEBI:30616"/>
    </ligand>
</feature>
<feature type="binding site" evidence="1">
    <location>
        <begin position="357"/>
        <end position="360"/>
    </location>
    <ligand>
        <name>ATP</name>
        <dbReference type="ChEBI" id="CHEBI:30616"/>
    </ligand>
</feature>
<gene>
    <name evidence="1" type="primary">pgk</name>
    <name type="ordered locus">CF0943</name>
</gene>
<comment type="catalytic activity">
    <reaction evidence="1">
        <text>(2R)-3-phosphoglycerate + ATP = (2R)-3-phospho-glyceroyl phosphate + ADP</text>
        <dbReference type="Rhea" id="RHEA:14801"/>
        <dbReference type="ChEBI" id="CHEBI:30616"/>
        <dbReference type="ChEBI" id="CHEBI:57604"/>
        <dbReference type="ChEBI" id="CHEBI:58272"/>
        <dbReference type="ChEBI" id="CHEBI:456216"/>
        <dbReference type="EC" id="2.7.2.3"/>
    </reaction>
</comment>
<comment type="pathway">
    <text evidence="1">Carbohydrate degradation; glycolysis; pyruvate from D-glyceraldehyde 3-phosphate: step 2/5.</text>
</comment>
<comment type="subunit">
    <text evidence="1">Monomer.</text>
</comment>
<comment type="subcellular location">
    <subcellularLocation>
        <location evidence="1">Cytoplasm</location>
    </subcellularLocation>
</comment>
<comment type="similarity">
    <text evidence="1">Belongs to the phosphoglycerate kinase family.</text>
</comment>
<name>PGK_CHLFF</name>
<evidence type="ECO:0000255" key="1">
    <source>
        <dbReference type="HAMAP-Rule" id="MF_00145"/>
    </source>
</evidence>
<accession>Q252S3</accession>
<dbReference type="EC" id="2.7.2.3" evidence="1"/>
<dbReference type="EMBL" id="AP006861">
    <property type="protein sequence ID" value="BAE81715.1"/>
    <property type="molecule type" value="Genomic_DNA"/>
</dbReference>
<dbReference type="RefSeq" id="WP_011458488.1">
    <property type="nucleotide sequence ID" value="NC_007899.1"/>
</dbReference>
<dbReference type="SMR" id="Q252S3"/>
<dbReference type="STRING" id="264202.CF0943"/>
<dbReference type="KEGG" id="cfe:CF0943"/>
<dbReference type="eggNOG" id="COG0126">
    <property type="taxonomic scope" value="Bacteria"/>
</dbReference>
<dbReference type="HOGENOM" id="CLU_025427_0_2_0"/>
<dbReference type="OrthoDB" id="9808460at2"/>
<dbReference type="UniPathway" id="UPA00109">
    <property type="reaction ID" value="UER00185"/>
</dbReference>
<dbReference type="Proteomes" id="UP000001260">
    <property type="component" value="Chromosome"/>
</dbReference>
<dbReference type="GO" id="GO:0005829">
    <property type="term" value="C:cytosol"/>
    <property type="evidence" value="ECO:0007669"/>
    <property type="project" value="TreeGrafter"/>
</dbReference>
<dbReference type="GO" id="GO:0043531">
    <property type="term" value="F:ADP binding"/>
    <property type="evidence" value="ECO:0007669"/>
    <property type="project" value="TreeGrafter"/>
</dbReference>
<dbReference type="GO" id="GO:0005524">
    <property type="term" value="F:ATP binding"/>
    <property type="evidence" value="ECO:0007669"/>
    <property type="project" value="UniProtKB-KW"/>
</dbReference>
<dbReference type="GO" id="GO:0004618">
    <property type="term" value="F:phosphoglycerate kinase activity"/>
    <property type="evidence" value="ECO:0007669"/>
    <property type="project" value="UniProtKB-UniRule"/>
</dbReference>
<dbReference type="GO" id="GO:0006094">
    <property type="term" value="P:gluconeogenesis"/>
    <property type="evidence" value="ECO:0007669"/>
    <property type="project" value="TreeGrafter"/>
</dbReference>
<dbReference type="GO" id="GO:0006096">
    <property type="term" value="P:glycolytic process"/>
    <property type="evidence" value="ECO:0007669"/>
    <property type="project" value="UniProtKB-UniRule"/>
</dbReference>
<dbReference type="CDD" id="cd00318">
    <property type="entry name" value="Phosphoglycerate_kinase"/>
    <property type="match status" value="1"/>
</dbReference>
<dbReference type="FunFam" id="3.40.50.1260:FF:000007">
    <property type="entry name" value="Phosphoglycerate kinase"/>
    <property type="match status" value="1"/>
</dbReference>
<dbReference type="FunFam" id="3.40.50.1260:FF:000011">
    <property type="entry name" value="Phosphoglycerate kinase"/>
    <property type="match status" value="1"/>
</dbReference>
<dbReference type="Gene3D" id="3.40.50.1260">
    <property type="entry name" value="Phosphoglycerate kinase, N-terminal domain"/>
    <property type="match status" value="2"/>
</dbReference>
<dbReference type="HAMAP" id="MF_00145">
    <property type="entry name" value="Phosphoglyc_kinase"/>
    <property type="match status" value="1"/>
</dbReference>
<dbReference type="InterPro" id="IPR001576">
    <property type="entry name" value="Phosphoglycerate_kinase"/>
</dbReference>
<dbReference type="InterPro" id="IPR015911">
    <property type="entry name" value="Phosphoglycerate_kinase_CS"/>
</dbReference>
<dbReference type="InterPro" id="IPR015824">
    <property type="entry name" value="Phosphoglycerate_kinase_N"/>
</dbReference>
<dbReference type="InterPro" id="IPR036043">
    <property type="entry name" value="Phosphoglycerate_kinase_sf"/>
</dbReference>
<dbReference type="PANTHER" id="PTHR11406">
    <property type="entry name" value="PHOSPHOGLYCERATE KINASE"/>
    <property type="match status" value="1"/>
</dbReference>
<dbReference type="PANTHER" id="PTHR11406:SF23">
    <property type="entry name" value="PHOSPHOGLYCERATE KINASE 1, CHLOROPLASTIC-RELATED"/>
    <property type="match status" value="1"/>
</dbReference>
<dbReference type="Pfam" id="PF00162">
    <property type="entry name" value="PGK"/>
    <property type="match status" value="1"/>
</dbReference>
<dbReference type="PIRSF" id="PIRSF000724">
    <property type="entry name" value="Pgk"/>
    <property type="match status" value="1"/>
</dbReference>
<dbReference type="PRINTS" id="PR00477">
    <property type="entry name" value="PHGLYCKINASE"/>
</dbReference>
<dbReference type="SUPFAM" id="SSF53748">
    <property type="entry name" value="Phosphoglycerate kinase"/>
    <property type="match status" value="1"/>
</dbReference>
<dbReference type="PROSITE" id="PS00111">
    <property type="entry name" value="PGLYCERATE_KINASE"/>
    <property type="match status" value="1"/>
</dbReference>
<reference key="1">
    <citation type="journal article" date="2006" name="DNA Res.">
        <title>Genome sequence of the cat pathogen, Chlamydophila felis.</title>
        <authorList>
            <person name="Azuma Y."/>
            <person name="Hirakawa H."/>
            <person name="Yamashita A."/>
            <person name="Cai Y."/>
            <person name="Rahman M.A."/>
            <person name="Suzuki H."/>
            <person name="Mitaku S."/>
            <person name="Toh H."/>
            <person name="Goto S."/>
            <person name="Murakami T."/>
            <person name="Sugi K."/>
            <person name="Hayashi H."/>
            <person name="Fukushi H."/>
            <person name="Hattori M."/>
            <person name="Kuhara S."/>
            <person name="Shirai M."/>
        </authorList>
    </citation>
    <scope>NUCLEOTIDE SEQUENCE [LARGE SCALE GENOMIC DNA]</scope>
    <source>
        <strain>Fe/C-56</strain>
    </source>
</reference>
<organism>
    <name type="scientific">Chlamydia felis (strain Fe/C-56)</name>
    <name type="common">Chlamydophila felis</name>
    <dbReference type="NCBI Taxonomy" id="264202"/>
    <lineage>
        <taxon>Bacteria</taxon>
        <taxon>Pseudomonadati</taxon>
        <taxon>Chlamydiota</taxon>
        <taxon>Chlamydiia</taxon>
        <taxon>Chlamydiales</taxon>
        <taxon>Chlamydiaceae</taxon>
        <taxon>Chlamydia/Chlamydophila group</taxon>
        <taxon>Chlamydia</taxon>
    </lineage>
</organism>
<protein>
    <recommendedName>
        <fullName evidence="1">Phosphoglycerate kinase</fullName>
        <ecNumber evidence="1">2.7.2.3</ecNumber>
    </recommendedName>
</protein>
<keyword id="KW-0067">ATP-binding</keyword>
<keyword id="KW-0963">Cytoplasm</keyword>
<keyword id="KW-0324">Glycolysis</keyword>
<keyword id="KW-0418">Kinase</keyword>
<keyword id="KW-0547">Nucleotide-binding</keyword>
<keyword id="KW-0808">Transferase</keyword>
<sequence length="403" mass="43122">MDRLTVRDLSPEEKKVLVRVDFNVPIKDGKILDDIRIRSAMPTINYLLQKRAAVILMSHLGRPRGSGFEEKYSLQPVVEVLEGYLGHHVPLAPDCIGEVARQAVAQLSPGRVLILENLRFHRGEEHPEEDPAFAAELSSYGDFYVNDAFGTSHRKHTSVYTVPQAFPGRCAAGLLMEKELEFLGTHLLISPKRPFTAILGGAKVSSKIGVIEALLSQVDNLLLAGGMGYTFLKALGKSVGNSLVEESGIELATRVLQIAKQRNVRIVLPVDAKVAKTCDSGVSWSEVSINQGIPADLEGLDIGTQTIQEFCKIIDASATVFWNGPVGVYEVPPFDQGSMAIANCLARHPSATTVVGGGDAAAVIALAGCSSQVSHVSTGGGASLEFLEKGFLPGTEVLSPTRG</sequence>